<comment type="function">
    <text evidence="1">Phosphorylation of dTMP to form dTDP in both de novo and salvage pathways of dTTP synthesis.</text>
</comment>
<comment type="catalytic activity">
    <reaction evidence="1">
        <text>dTMP + ATP = dTDP + ADP</text>
        <dbReference type="Rhea" id="RHEA:13517"/>
        <dbReference type="ChEBI" id="CHEBI:30616"/>
        <dbReference type="ChEBI" id="CHEBI:58369"/>
        <dbReference type="ChEBI" id="CHEBI:63528"/>
        <dbReference type="ChEBI" id="CHEBI:456216"/>
        <dbReference type="EC" id="2.7.4.9"/>
    </reaction>
</comment>
<comment type="similarity">
    <text evidence="1">Belongs to the thymidylate kinase family.</text>
</comment>
<proteinExistence type="inferred from homology"/>
<reference key="1">
    <citation type="journal article" date="2005" name="J. Bacteriol.">
        <title>Whole-genome sequencing of Staphylococcus haemolyticus uncovers the extreme plasticity of its genome and the evolution of human-colonizing staphylococcal species.</title>
        <authorList>
            <person name="Takeuchi F."/>
            <person name="Watanabe S."/>
            <person name="Baba T."/>
            <person name="Yuzawa H."/>
            <person name="Ito T."/>
            <person name="Morimoto Y."/>
            <person name="Kuroda M."/>
            <person name="Cui L."/>
            <person name="Takahashi M."/>
            <person name="Ankai A."/>
            <person name="Baba S."/>
            <person name="Fukui S."/>
            <person name="Lee J.C."/>
            <person name="Hiramatsu K."/>
        </authorList>
    </citation>
    <scope>NUCLEOTIDE SEQUENCE [LARGE SCALE GENOMIC DNA]</scope>
    <source>
        <strain>JCSC1435</strain>
    </source>
</reference>
<name>KTHY_STAHJ</name>
<accession>Q4L3D9</accession>
<feature type="chain" id="PRO_1000023290" description="Thymidylate kinase">
    <location>
        <begin position="1"/>
        <end position="203"/>
    </location>
</feature>
<feature type="binding site" evidence="1">
    <location>
        <begin position="9"/>
        <end position="16"/>
    </location>
    <ligand>
        <name>ATP</name>
        <dbReference type="ChEBI" id="CHEBI:30616"/>
    </ligand>
</feature>
<gene>
    <name evidence="1" type="primary">tmk</name>
    <name type="ordered locus">SH2529</name>
</gene>
<dbReference type="EC" id="2.7.4.9" evidence="1"/>
<dbReference type="EMBL" id="AP006716">
    <property type="protein sequence ID" value="BAE05838.1"/>
    <property type="molecule type" value="Genomic_DNA"/>
</dbReference>
<dbReference type="RefSeq" id="WP_011276779.1">
    <property type="nucleotide sequence ID" value="NC_007168.1"/>
</dbReference>
<dbReference type="SMR" id="Q4L3D9"/>
<dbReference type="GeneID" id="93781758"/>
<dbReference type="KEGG" id="sha:SH2529"/>
<dbReference type="eggNOG" id="COG0125">
    <property type="taxonomic scope" value="Bacteria"/>
</dbReference>
<dbReference type="HOGENOM" id="CLU_049131_0_2_9"/>
<dbReference type="OrthoDB" id="9774907at2"/>
<dbReference type="Proteomes" id="UP000000543">
    <property type="component" value="Chromosome"/>
</dbReference>
<dbReference type="GO" id="GO:0005829">
    <property type="term" value="C:cytosol"/>
    <property type="evidence" value="ECO:0007669"/>
    <property type="project" value="TreeGrafter"/>
</dbReference>
<dbReference type="GO" id="GO:0005524">
    <property type="term" value="F:ATP binding"/>
    <property type="evidence" value="ECO:0007669"/>
    <property type="project" value="UniProtKB-UniRule"/>
</dbReference>
<dbReference type="GO" id="GO:0004798">
    <property type="term" value="F:dTMP kinase activity"/>
    <property type="evidence" value="ECO:0007669"/>
    <property type="project" value="UniProtKB-UniRule"/>
</dbReference>
<dbReference type="GO" id="GO:0006233">
    <property type="term" value="P:dTDP biosynthetic process"/>
    <property type="evidence" value="ECO:0007669"/>
    <property type="project" value="InterPro"/>
</dbReference>
<dbReference type="GO" id="GO:0006235">
    <property type="term" value="P:dTTP biosynthetic process"/>
    <property type="evidence" value="ECO:0007669"/>
    <property type="project" value="UniProtKB-UniRule"/>
</dbReference>
<dbReference type="GO" id="GO:0006227">
    <property type="term" value="P:dUDP biosynthetic process"/>
    <property type="evidence" value="ECO:0007669"/>
    <property type="project" value="TreeGrafter"/>
</dbReference>
<dbReference type="CDD" id="cd01672">
    <property type="entry name" value="TMPK"/>
    <property type="match status" value="1"/>
</dbReference>
<dbReference type="FunFam" id="3.40.50.300:FF:000225">
    <property type="entry name" value="Thymidylate kinase"/>
    <property type="match status" value="1"/>
</dbReference>
<dbReference type="Gene3D" id="3.40.50.300">
    <property type="entry name" value="P-loop containing nucleotide triphosphate hydrolases"/>
    <property type="match status" value="1"/>
</dbReference>
<dbReference type="HAMAP" id="MF_00165">
    <property type="entry name" value="Thymidylate_kinase"/>
    <property type="match status" value="1"/>
</dbReference>
<dbReference type="InterPro" id="IPR027417">
    <property type="entry name" value="P-loop_NTPase"/>
</dbReference>
<dbReference type="InterPro" id="IPR039430">
    <property type="entry name" value="Thymidylate_kin-like_dom"/>
</dbReference>
<dbReference type="InterPro" id="IPR018095">
    <property type="entry name" value="Thymidylate_kin_CS"/>
</dbReference>
<dbReference type="InterPro" id="IPR018094">
    <property type="entry name" value="Thymidylate_kinase"/>
</dbReference>
<dbReference type="NCBIfam" id="TIGR00041">
    <property type="entry name" value="DTMP_kinase"/>
    <property type="match status" value="1"/>
</dbReference>
<dbReference type="PANTHER" id="PTHR10344">
    <property type="entry name" value="THYMIDYLATE KINASE"/>
    <property type="match status" value="1"/>
</dbReference>
<dbReference type="PANTHER" id="PTHR10344:SF4">
    <property type="entry name" value="UMP-CMP KINASE 2, MITOCHONDRIAL"/>
    <property type="match status" value="1"/>
</dbReference>
<dbReference type="Pfam" id="PF02223">
    <property type="entry name" value="Thymidylate_kin"/>
    <property type="match status" value="1"/>
</dbReference>
<dbReference type="SUPFAM" id="SSF52540">
    <property type="entry name" value="P-loop containing nucleoside triphosphate hydrolases"/>
    <property type="match status" value="1"/>
</dbReference>
<dbReference type="PROSITE" id="PS01331">
    <property type="entry name" value="THYMIDYLATE_KINASE"/>
    <property type="match status" value="1"/>
</dbReference>
<protein>
    <recommendedName>
        <fullName evidence="1">Thymidylate kinase</fullName>
        <ecNumber evidence="1">2.7.4.9</ecNumber>
    </recommendedName>
    <alternativeName>
        <fullName evidence="1">dTMP kinase</fullName>
    </alternativeName>
</protein>
<organism>
    <name type="scientific">Staphylococcus haemolyticus (strain JCSC1435)</name>
    <dbReference type="NCBI Taxonomy" id="279808"/>
    <lineage>
        <taxon>Bacteria</taxon>
        <taxon>Bacillati</taxon>
        <taxon>Bacillota</taxon>
        <taxon>Bacilli</taxon>
        <taxon>Bacillales</taxon>
        <taxon>Staphylococcaceae</taxon>
        <taxon>Staphylococcus</taxon>
    </lineage>
</organism>
<keyword id="KW-0067">ATP-binding</keyword>
<keyword id="KW-0418">Kinase</keyword>
<keyword id="KW-0545">Nucleotide biosynthesis</keyword>
<keyword id="KW-0547">Nucleotide-binding</keyword>
<keyword id="KW-0808">Transferase</keyword>
<evidence type="ECO:0000255" key="1">
    <source>
        <dbReference type="HAMAP-Rule" id="MF_00165"/>
    </source>
</evidence>
<sequence length="203" mass="23036">MSAFITFEGPEGSGKTTVLQRVSEKLAQDYQLIATREPGGVPTGEEIRKVVLEGANMDIRTEAMLFAASRREHLVEKVVPALNDNKIVLCDRYIDSSLAYQGYARGIGIEEVKQLNDFAINGLYPDLTIYLDITAEVGRDRILKNQRDQNRLDKEDIAFHEKVIEGYRQIIQETPQRFAVVDATRNIDDVVNETYEIILNFLK</sequence>